<proteinExistence type="inferred from homology"/>
<dbReference type="EMBL" id="CP000100">
    <property type="protein sequence ID" value="ABB57047.1"/>
    <property type="molecule type" value="Genomic_DNA"/>
</dbReference>
<dbReference type="RefSeq" id="WP_011377832.1">
    <property type="nucleotide sequence ID" value="NZ_JACJTX010000003.1"/>
</dbReference>
<dbReference type="SMR" id="Q31PH2"/>
<dbReference type="STRING" id="1140.Synpcc7942_1017"/>
<dbReference type="PaxDb" id="1140-Synpcc7942_1017"/>
<dbReference type="KEGG" id="syf:Synpcc7942_1017"/>
<dbReference type="eggNOG" id="COG0217">
    <property type="taxonomic scope" value="Bacteria"/>
</dbReference>
<dbReference type="HOGENOM" id="CLU_062974_1_0_3"/>
<dbReference type="OrthoDB" id="9781053at2"/>
<dbReference type="BioCyc" id="SYNEL:SYNPCC7942_1017-MONOMER"/>
<dbReference type="Proteomes" id="UP000889800">
    <property type="component" value="Chromosome"/>
</dbReference>
<dbReference type="GO" id="GO:0005829">
    <property type="term" value="C:cytosol"/>
    <property type="evidence" value="ECO:0007669"/>
    <property type="project" value="TreeGrafter"/>
</dbReference>
<dbReference type="GO" id="GO:0003677">
    <property type="term" value="F:DNA binding"/>
    <property type="evidence" value="ECO:0007669"/>
    <property type="project" value="UniProtKB-UniRule"/>
</dbReference>
<dbReference type="GO" id="GO:0006355">
    <property type="term" value="P:regulation of DNA-templated transcription"/>
    <property type="evidence" value="ECO:0007669"/>
    <property type="project" value="UniProtKB-UniRule"/>
</dbReference>
<dbReference type="FunFam" id="1.10.10.200:FF:000002">
    <property type="entry name" value="Probable transcriptional regulatory protein CLM62_37755"/>
    <property type="match status" value="1"/>
</dbReference>
<dbReference type="Gene3D" id="1.10.10.200">
    <property type="match status" value="1"/>
</dbReference>
<dbReference type="Gene3D" id="3.30.70.980">
    <property type="match status" value="2"/>
</dbReference>
<dbReference type="HAMAP" id="MF_00693">
    <property type="entry name" value="Transcrip_reg_TACO1"/>
    <property type="match status" value="1"/>
</dbReference>
<dbReference type="InterPro" id="IPR017856">
    <property type="entry name" value="Integrase-like_N"/>
</dbReference>
<dbReference type="InterPro" id="IPR048300">
    <property type="entry name" value="TACO1_YebC-like_2nd/3rd_dom"/>
</dbReference>
<dbReference type="InterPro" id="IPR049083">
    <property type="entry name" value="TACO1_YebC_N"/>
</dbReference>
<dbReference type="InterPro" id="IPR002876">
    <property type="entry name" value="Transcrip_reg_TACO1-like"/>
</dbReference>
<dbReference type="InterPro" id="IPR026564">
    <property type="entry name" value="Transcrip_reg_TACO1-like_dom3"/>
</dbReference>
<dbReference type="InterPro" id="IPR029072">
    <property type="entry name" value="YebC-like"/>
</dbReference>
<dbReference type="NCBIfam" id="NF001030">
    <property type="entry name" value="PRK00110.1"/>
    <property type="match status" value="1"/>
</dbReference>
<dbReference type="NCBIfam" id="NF009044">
    <property type="entry name" value="PRK12378.1"/>
    <property type="match status" value="1"/>
</dbReference>
<dbReference type="NCBIfam" id="TIGR01033">
    <property type="entry name" value="YebC/PmpR family DNA-binding transcriptional regulator"/>
    <property type="match status" value="1"/>
</dbReference>
<dbReference type="PANTHER" id="PTHR12532:SF6">
    <property type="entry name" value="TRANSCRIPTIONAL REGULATORY PROTEIN YEBC-RELATED"/>
    <property type="match status" value="1"/>
</dbReference>
<dbReference type="PANTHER" id="PTHR12532">
    <property type="entry name" value="TRANSLATIONAL ACTIVATOR OF CYTOCHROME C OXIDASE 1"/>
    <property type="match status" value="1"/>
</dbReference>
<dbReference type="Pfam" id="PF20772">
    <property type="entry name" value="TACO1_YebC_N"/>
    <property type="match status" value="1"/>
</dbReference>
<dbReference type="Pfam" id="PF01709">
    <property type="entry name" value="Transcrip_reg"/>
    <property type="match status" value="1"/>
</dbReference>
<dbReference type="SUPFAM" id="SSF75625">
    <property type="entry name" value="YebC-like"/>
    <property type="match status" value="1"/>
</dbReference>
<accession>Q31PH2</accession>
<name>Y1017_SYNE7</name>
<feature type="chain" id="PRO_0000257151" description="Probable transcriptional regulatory protein Synpcc7942_1017">
    <location>
        <begin position="1"/>
        <end position="253"/>
    </location>
</feature>
<organism>
    <name type="scientific">Synechococcus elongatus (strain ATCC 33912 / PCC 7942 / FACHB-805)</name>
    <name type="common">Anacystis nidulans R2</name>
    <dbReference type="NCBI Taxonomy" id="1140"/>
    <lineage>
        <taxon>Bacteria</taxon>
        <taxon>Bacillati</taxon>
        <taxon>Cyanobacteriota</taxon>
        <taxon>Cyanophyceae</taxon>
        <taxon>Synechococcales</taxon>
        <taxon>Synechococcaceae</taxon>
        <taxon>Synechococcus</taxon>
    </lineage>
</organism>
<evidence type="ECO:0000255" key="1">
    <source>
        <dbReference type="HAMAP-Rule" id="MF_00693"/>
    </source>
</evidence>
<reference key="1">
    <citation type="submission" date="2005-08" db="EMBL/GenBank/DDBJ databases">
        <title>Complete sequence of chromosome 1 of Synechococcus elongatus PCC 7942.</title>
        <authorList>
            <consortium name="US DOE Joint Genome Institute"/>
            <person name="Copeland A."/>
            <person name="Lucas S."/>
            <person name="Lapidus A."/>
            <person name="Barry K."/>
            <person name="Detter J.C."/>
            <person name="Glavina T."/>
            <person name="Hammon N."/>
            <person name="Israni S."/>
            <person name="Pitluck S."/>
            <person name="Schmutz J."/>
            <person name="Larimer F."/>
            <person name="Land M."/>
            <person name="Kyrpides N."/>
            <person name="Lykidis A."/>
            <person name="Golden S."/>
            <person name="Richardson P."/>
        </authorList>
    </citation>
    <scope>NUCLEOTIDE SEQUENCE [LARGE SCALE GENOMIC DNA]</scope>
    <source>
        <strain>ATCC 33912 / PCC 7942 / FACHB-805</strain>
    </source>
</reference>
<comment type="subcellular location">
    <subcellularLocation>
        <location evidence="1">Cytoplasm</location>
    </subcellularLocation>
</comment>
<comment type="similarity">
    <text evidence="1">Belongs to the TACO1 family.</text>
</comment>
<protein>
    <recommendedName>
        <fullName evidence="1">Probable transcriptional regulatory protein Synpcc7942_1017</fullName>
    </recommendedName>
</protein>
<keyword id="KW-0963">Cytoplasm</keyword>
<keyword id="KW-0238">DNA-binding</keyword>
<keyword id="KW-1185">Reference proteome</keyword>
<keyword id="KW-0804">Transcription</keyword>
<keyword id="KW-0805">Transcription regulation</keyword>
<gene>
    <name type="ordered locus">Synpcc7942_1017</name>
</gene>
<sequence length="253" mass="27386">MAGHSKWANIKRQKARVDAKKAQVFARLSRAMIVAARQGLPDPAANFQLRTAIEKAKAAGIPNDNIERAIAKGAGTLSGDGRQFESVRYEGYGPSGIAILIEALTDNRNRTAANLRAAFSKQGGNLGETGCVSWMFRQRGVVQLTGAIAEADLLEALLDLPAESYDLDESGAIVYCSIADLEALSTQLRQLGYPVEDSELRWIPNDYQLVTDGEQARSLLRLLDTLETLEDVCSVTANLELPPELVTALEATL</sequence>